<name>NSP4_ROTHM</name>
<reference key="1">
    <citation type="journal article" date="1997" name="Virology">
        <title>Genetic characterization of the rotavirus nonstructural protein, NSP4.</title>
        <authorList>
            <person name="Kirkwood C.D."/>
            <person name="Palombo E.A."/>
        </authorList>
    </citation>
    <scope>NUCLEOTIDE SEQUENCE [MRNA]</scope>
</reference>
<dbReference type="EMBL" id="U59109">
    <property type="protein sequence ID" value="AAB81295.1"/>
    <property type="molecule type" value="mRNA"/>
</dbReference>
<dbReference type="SMR" id="Q82034"/>
<dbReference type="GO" id="GO:0005576">
    <property type="term" value="C:extracellular region"/>
    <property type="evidence" value="ECO:0007669"/>
    <property type="project" value="UniProtKB-SubCell"/>
</dbReference>
<dbReference type="GO" id="GO:0044155">
    <property type="term" value="C:host caveola"/>
    <property type="evidence" value="ECO:0007669"/>
    <property type="project" value="UniProtKB-SubCell"/>
</dbReference>
<dbReference type="GO" id="GO:0044169">
    <property type="term" value="C:host cell rough endoplasmic reticulum membrane"/>
    <property type="evidence" value="ECO:0007669"/>
    <property type="project" value="UniProtKB-SubCell"/>
</dbReference>
<dbReference type="GO" id="GO:0016020">
    <property type="term" value="C:membrane"/>
    <property type="evidence" value="ECO:0007669"/>
    <property type="project" value="UniProtKB-UniRule"/>
</dbReference>
<dbReference type="GO" id="GO:0015267">
    <property type="term" value="F:channel activity"/>
    <property type="evidence" value="ECO:0007669"/>
    <property type="project" value="UniProtKB-KW"/>
</dbReference>
<dbReference type="GO" id="GO:0046872">
    <property type="term" value="F:metal ion binding"/>
    <property type="evidence" value="ECO:0007669"/>
    <property type="project" value="UniProtKB-UniRule"/>
</dbReference>
<dbReference type="GO" id="GO:0090729">
    <property type="term" value="F:toxin activity"/>
    <property type="evidence" value="ECO:0007669"/>
    <property type="project" value="UniProtKB-UniRule"/>
</dbReference>
<dbReference type="GO" id="GO:0034220">
    <property type="term" value="P:monoatomic ion transmembrane transport"/>
    <property type="evidence" value="ECO:0007669"/>
    <property type="project" value="UniProtKB-KW"/>
</dbReference>
<dbReference type="GO" id="GO:0039520">
    <property type="term" value="P:symbiont-mediated activation of host autophagy"/>
    <property type="evidence" value="ECO:0007669"/>
    <property type="project" value="UniProtKB-KW"/>
</dbReference>
<dbReference type="GO" id="GO:0016032">
    <property type="term" value="P:viral process"/>
    <property type="evidence" value="ECO:0007669"/>
    <property type="project" value="UniProtKB-UniRule"/>
</dbReference>
<dbReference type="Gene3D" id="1.20.5.430">
    <property type="match status" value="1"/>
</dbReference>
<dbReference type="HAMAP" id="MF_04091">
    <property type="entry name" value="ROTA_NSP4"/>
    <property type="match status" value="1"/>
</dbReference>
<dbReference type="InterPro" id="IPR002107">
    <property type="entry name" value="Rotavirus_NSP4"/>
</dbReference>
<dbReference type="Pfam" id="PF01452">
    <property type="entry name" value="Rota_NSP4"/>
    <property type="match status" value="1"/>
</dbReference>
<dbReference type="SUPFAM" id="SSF58030">
    <property type="entry name" value="Rotavirus nonstructural proteins"/>
    <property type="match status" value="1"/>
</dbReference>
<comment type="function">
    <text evidence="1">Plays an essential role in the virus replication cycle by acting as a viroporin. Creates a pore in the host endoplasmic reticulum and as a consequence releases Ca(2+) in the cytoplasm of infected cell. In turn, high levels of cytoplasmic calcium trigger membrane trafficking and transport of viral ER-associated proteins to viroplasms, sites of viral genome replication and immature particle assembly.</text>
</comment>
<comment type="function">
    <text evidence="1">The secreted form acts as an enterotoxin that causes phospholipase C-dependent elevation of the intracellular calcium concentration in host intestinal mucosa cells. Increased concentration of intracellular calcium disrupts the cytoskeleton and the tight junctions, raising the paracellular permeability. Potentiates chloride ion secretion through a calcium ion-dependent signaling pathway, inducing age-dependent diarrhea. To perform this enterotoxigenic role in vivo, NSP4 is released from infected enterocytes in a soluble form capable of diffusing within the intestinal lumen and interacting with host plasma membrane receptors on neighboring epithelial cells such as integrins ITGA1/ITGB1 and ITGA2/ITGB1.</text>
</comment>
<comment type="subunit">
    <text evidence="1">Homotetramer. Interacts with the immature particle in the viroplasm. Interacts with host CAV1, early and late in infection. Interacts with host integrin ITGA1/ITGB1 heterodimer. Interacts with host integrin ITGA2/ITGB1 heterodimer. Interaction with microtubules blocks trafficking to the Golgi apparatus.</text>
</comment>
<comment type="subcellular location">
    <subcellularLocation>
        <location evidence="1">Host rough endoplasmic reticulum membrane</location>
        <topology evidence="1">Single-pass type III membrane protein</topology>
    </subcellularLocation>
    <subcellularLocation>
        <location evidence="1">Host membrane</location>
        <location evidence="1">Host caveola</location>
        <topology evidence="1">Single-pass type III membrane protein</topology>
    </subcellularLocation>
    <subcellularLocation>
        <location evidence="1">Secreted</location>
    </subcellularLocation>
    <text evidence="1">NSP4 also localizes in vesicular structures which contain autophagosomal markers and associate with viroplasms in virus-infected cells. Additionally, a soluble form of glycosylated NSP4 is secreted despite retention of its transmembrane domain.</text>
</comment>
<comment type="domain">
    <text evidence="1">Binds 1 calcium ion per tetramer.</text>
</comment>
<comment type="PTM">
    <text evidence="1">The N-glycosyl content is primarily Man(9)GlcNAc, with a small amount of Man(8)GlcNAc.</text>
</comment>
<comment type="similarity">
    <text evidence="1">Belongs to the rotavirus NSP4 family.</text>
</comment>
<organism>
    <name type="scientific">Rotavirus A (strain RVA/Human/Venezuela/M37/1982/G1P2A[6])</name>
    <name type="common">RV-A</name>
    <dbReference type="NCBI Taxonomy" id="10954"/>
    <lineage>
        <taxon>Viruses</taxon>
        <taxon>Riboviria</taxon>
        <taxon>Orthornavirae</taxon>
        <taxon>Duplornaviricota</taxon>
        <taxon>Resentoviricetes</taxon>
        <taxon>Reovirales</taxon>
        <taxon>Sedoreoviridae</taxon>
        <taxon>Rotavirus</taxon>
        <taxon>Rotavirus A</taxon>
    </lineage>
</organism>
<proteinExistence type="evidence at transcript level"/>
<protein>
    <recommendedName>
        <fullName evidence="1">Non-structural glycoprotein 4</fullName>
        <shortName evidence="1">NSP4</shortName>
    </recommendedName>
    <alternativeName>
        <fullName evidence="1">NCVP5</fullName>
    </alternativeName>
    <alternativeName>
        <fullName evidence="1">NS28</fullName>
    </alternativeName>
</protein>
<keyword id="KW-1072">Activation of host autophagy by virus</keyword>
<keyword id="KW-0106">Calcium</keyword>
<keyword id="KW-0260">Enterotoxin</keyword>
<keyword id="KW-0325">Glycoprotein</keyword>
<keyword id="KW-1038">Host endoplasmic reticulum</keyword>
<keyword id="KW-1043">Host membrane</keyword>
<keyword id="KW-0945">Host-virus interaction</keyword>
<keyword id="KW-0407">Ion channel</keyword>
<keyword id="KW-0406">Ion transport</keyword>
<keyword id="KW-0472">Membrane</keyword>
<keyword id="KW-0479">Metal-binding</keyword>
<keyword id="KW-0964">Secreted</keyword>
<keyword id="KW-0735">Signal-anchor</keyword>
<keyword id="KW-0800">Toxin</keyword>
<keyword id="KW-0812">Transmembrane</keyword>
<keyword id="KW-1133">Transmembrane helix</keyword>
<keyword id="KW-0813">Transport</keyword>
<keyword id="KW-1182">Viral ion channel</keyword>
<keyword id="KW-0843">Virulence</keyword>
<sequence>MDKLADLNYTLSVITSMNDTLHSIIEDPGMAYFTYIASVLTVLFTLHKASIPTMKIALKTSKCSYKVLKYCIVTIINTFLKLAGYKEQVTTKDEIEQQMDRIVKEMRRQLEMIDKLTTREIEQVELLKRIHDNLITRTVDVIDMSKEFNQKNIKTLDEWESGKNPYEPSEVTASM</sequence>
<accession>Q82034</accession>
<feature type="chain" id="PRO_0000369491" description="Non-structural glycoprotein 4">
    <location>
        <begin position="1"/>
        <end position="175"/>
    </location>
</feature>
<feature type="topological domain" description="Lumenal" evidence="1">
    <location>
        <begin position="1"/>
        <end position="28"/>
    </location>
</feature>
<feature type="transmembrane region" description="Helical; Signal-anchor for type III membrane protein" evidence="1">
    <location>
        <begin position="29"/>
        <end position="51"/>
    </location>
</feature>
<feature type="topological domain" description="Cytoplasmic" evidence="1">
    <location>
        <begin position="52"/>
        <end position="175"/>
    </location>
</feature>
<feature type="binding site" evidence="1">
    <location>
        <position position="120"/>
    </location>
    <ligand>
        <name>Ca(2+)</name>
        <dbReference type="ChEBI" id="CHEBI:29108"/>
    </ligand>
</feature>
<feature type="binding site" evidence="1">
    <location>
        <position position="123"/>
    </location>
    <ligand>
        <name>Ca(2+)</name>
        <dbReference type="ChEBI" id="CHEBI:29108"/>
    </ligand>
</feature>
<feature type="glycosylation site" description="N-linked (GlcNAc...) asparagine; by host" evidence="1">
    <location>
        <position position="8"/>
    </location>
</feature>
<feature type="glycosylation site" description="N-linked (GlcNAc...) asparagine; by host" evidence="1">
    <location>
        <position position="18"/>
    </location>
</feature>
<organismHost>
    <name type="scientific">Homo sapiens</name>
    <name type="common">Human</name>
    <dbReference type="NCBI Taxonomy" id="9606"/>
</organismHost>
<evidence type="ECO:0000255" key="1">
    <source>
        <dbReference type="HAMAP-Rule" id="MF_04091"/>
    </source>
</evidence>